<sequence length="182" mass="19355">MRVLGIDPGLRRTGFGVIDAEGMRLRYVASGTIVVPPALSLPERLKVILDNLREVARETRPDVAALEIVFLNTNPASTLLLGQARGAALCALADSALDVHEYTALQIKKAVVGTGRAAKEQVQMMVQRLLSLDGTPAPDSADALACAICHAHVGPLHDRLDRLGTAAQLGSRPRLRNGRLVG</sequence>
<protein>
    <recommendedName>
        <fullName evidence="1">Crossover junction endodeoxyribonuclease RuvC</fullName>
        <ecNumber evidence="1">3.1.21.10</ecNumber>
    </recommendedName>
    <alternativeName>
        <fullName evidence="1">Holliday junction nuclease RuvC</fullName>
    </alternativeName>
    <alternativeName>
        <fullName evidence="1">Holliday junction resolvase RuvC</fullName>
    </alternativeName>
</protein>
<proteinExistence type="inferred from homology"/>
<keyword id="KW-0963">Cytoplasm</keyword>
<keyword id="KW-0227">DNA damage</keyword>
<keyword id="KW-0233">DNA recombination</keyword>
<keyword id="KW-0234">DNA repair</keyword>
<keyword id="KW-0238">DNA-binding</keyword>
<keyword id="KW-0255">Endonuclease</keyword>
<keyword id="KW-0378">Hydrolase</keyword>
<keyword id="KW-0460">Magnesium</keyword>
<keyword id="KW-0479">Metal-binding</keyword>
<keyword id="KW-0540">Nuclease</keyword>
<comment type="function">
    <text evidence="1">The RuvA-RuvB-RuvC complex processes Holliday junction (HJ) DNA during genetic recombination and DNA repair. Endonuclease that resolves HJ intermediates. Cleaves cruciform DNA by making single-stranded nicks across the HJ at symmetrical positions within the homologous arms, yielding a 5'-phosphate and a 3'-hydroxyl group; requires a central core of homology in the junction. The consensus cleavage sequence is 5'-(A/T)TT(C/G)-3'. Cleavage occurs on the 3'-side of the TT dinucleotide at the point of strand exchange. HJ branch migration catalyzed by RuvA-RuvB allows RuvC to scan DNA until it finds its consensus sequence, where it cleaves and resolves the cruciform DNA.</text>
</comment>
<comment type="catalytic activity">
    <reaction evidence="1">
        <text>Endonucleolytic cleavage at a junction such as a reciprocal single-stranded crossover between two homologous DNA duplexes (Holliday junction).</text>
        <dbReference type="EC" id="3.1.21.10"/>
    </reaction>
</comment>
<comment type="cofactor">
    <cofactor evidence="1">
        <name>Mg(2+)</name>
        <dbReference type="ChEBI" id="CHEBI:18420"/>
    </cofactor>
    <text evidence="1">Binds 2 Mg(2+) ion per subunit.</text>
</comment>
<comment type="subunit">
    <text evidence="1">Homodimer which binds Holliday junction (HJ) DNA. The HJ becomes 2-fold symmetrical on binding to RuvC with unstacked arms; it has a different conformation from HJ DNA in complex with RuvA. In the full resolvosome a probable DNA-RuvA(4)-RuvB(12)-RuvC(2) complex forms which resolves the HJ.</text>
</comment>
<comment type="subcellular location">
    <subcellularLocation>
        <location evidence="1">Cytoplasm</location>
    </subcellularLocation>
</comment>
<comment type="similarity">
    <text evidence="1">Belongs to the RuvC family.</text>
</comment>
<name>RUVC_BORPA</name>
<dbReference type="EC" id="3.1.21.10" evidence="1"/>
<dbReference type="EMBL" id="BX640434">
    <property type="protein sequence ID" value="CAE38851.1"/>
    <property type="molecule type" value="Genomic_DNA"/>
</dbReference>
<dbReference type="RefSeq" id="WP_003820969.1">
    <property type="nucleotide sequence ID" value="NC_002928.3"/>
</dbReference>
<dbReference type="SMR" id="Q7W4U0"/>
<dbReference type="GeneID" id="93205356"/>
<dbReference type="KEGG" id="bpa:BPP3567"/>
<dbReference type="HOGENOM" id="CLU_091257_2_1_4"/>
<dbReference type="Proteomes" id="UP000001421">
    <property type="component" value="Chromosome"/>
</dbReference>
<dbReference type="GO" id="GO:0005737">
    <property type="term" value="C:cytoplasm"/>
    <property type="evidence" value="ECO:0007669"/>
    <property type="project" value="UniProtKB-SubCell"/>
</dbReference>
<dbReference type="GO" id="GO:0048476">
    <property type="term" value="C:Holliday junction resolvase complex"/>
    <property type="evidence" value="ECO:0007669"/>
    <property type="project" value="UniProtKB-UniRule"/>
</dbReference>
<dbReference type="GO" id="GO:0008821">
    <property type="term" value="F:crossover junction DNA endonuclease activity"/>
    <property type="evidence" value="ECO:0007669"/>
    <property type="project" value="UniProtKB-UniRule"/>
</dbReference>
<dbReference type="GO" id="GO:0003677">
    <property type="term" value="F:DNA binding"/>
    <property type="evidence" value="ECO:0007669"/>
    <property type="project" value="UniProtKB-KW"/>
</dbReference>
<dbReference type="GO" id="GO:0000287">
    <property type="term" value="F:magnesium ion binding"/>
    <property type="evidence" value="ECO:0007669"/>
    <property type="project" value="UniProtKB-UniRule"/>
</dbReference>
<dbReference type="GO" id="GO:0006310">
    <property type="term" value="P:DNA recombination"/>
    <property type="evidence" value="ECO:0007669"/>
    <property type="project" value="UniProtKB-UniRule"/>
</dbReference>
<dbReference type="GO" id="GO:0006281">
    <property type="term" value="P:DNA repair"/>
    <property type="evidence" value="ECO:0007669"/>
    <property type="project" value="UniProtKB-UniRule"/>
</dbReference>
<dbReference type="CDD" id="cd16962">
    <property type="entry name" value="RuvC"/>
    <property type="match status" value="1"/>
</dbReference>
<dbReference type="FunFam" id="3.30.420.10:FF:000002">
    <property type="entry name" value="Crossover junction endodeoxyribonuclease RuvC"/>
    <property type="match status" value="1"/>
</dbReference>
<dbReference type="Gene3D" id="3.30.420.10">
    <property type="entry name" value="Ribonuclease H-like superfamily/Ribonuclease H"/>
    <property type="match status" value="1"/>
</dbReference>
<dbReference type="HAMAP" id="MF_00034">
    <property type="entry name" value="RuvC"/>
    <property type="match status" value="1"/>
</dbReference>
<dbReference type="InterPro" id="IPR012337">
    <property type="entry name" value="RNaseH-like_sf"/>
</dbReference>
<dbReference type="InterPro" id="IPR036397">
    <property type="entry name" value="RNaseH_sf"/>
</dbReference>
<dbReference type="InterPro" id="IPR020563">
    <property type="entry name" value="X-over_junc_endoDNase_Mg_BS"/>
</dbReference>
<dbReference type="InterPro" id="IPR002176">
    <property type="entry name" value="X-over_junc_endoDNase_RuvC"/>
</dbReference>
<dbReference type="NCBIfam" id="TIGR00228">
    <property type="entry name" value="ruvC"/>
    <property type="match status" value="1"/>
</dbReference>
<dbReference type="PANTHER" id="PTHR30194">
    <property type="entry name" value="CROSSOVER JUNCTION ENDODEOXYRIBONUCLEASE RUVC"/>
    <property type="match status" value="1"/>
</dbReference>
<dbReference type="PANTHER" id="PTHR30194:SF3">
    <property type="entry name" value="CROSSOVER JUNCTION ENDODEOXYRIBONUCLEASE RUVC"/>
    <property type="match status" value="1"/>
</dbReference>
<dbReference type="Pfam" id="PF02075">
    <property type="entry name" value="RuvC"/>
    <property type="match status" value="1"/>
</dbReference>
<dbReference type="PRINTS" id="PR00696">
    <property type="entry name" value="RSOLVASERUVC"/>
</dbReference>
<dbReference type="SUPFAM" id="SSF53098">
    <property type="entry name" value="Ribonuclease H-like"/>
    <property type="match status" value="1"/>
</dbReference>
<dbReference type="PROSITE" id="PS01321">
    <property type="entry name" value="RUVC"/>
    <property type="match status" value="1"/>
</dbReference>
<gene>
    <name evidence="1" type="primary">ruvC</name>
    <name type="ordered locus">BPP3567</name>
</gene>
<evidence type="ECO:0000255" key="1">
    <source>
        <dbReference type="HAMAP-Rule" id="MF_00034"/>
    </source>
</evidence>
<feature type="chain" id="PRO_0000183078" description="Crossover junction endodeoxyribonuclease RuvC">
    <location>
        <begin position="1"/>
        <end position="182"/>
    </location>
</feature>
<feature type="active site" evidence="1">
    <location>
        <position position="7"/>
    </location>
</feature>
<feature type="active site" evidence="1">
    <location>
        <position position="67"/>
    </location>
</feature>
<feature type="active site" evidence="1">
    <location>
        <position position="139"/>
    </location>
</feature>
<feature type="binding site" evidence="1">
    <location>
        <position position="7"/>
    </location>
    <ligand>
        <name>Mg(2+)</name>
        <dbReference type="ChEBI" id="CHEBI:18420"/>
        <label>1</label>
    </ligand>
</feature>
<feature type="binding site" evidence="1">
    <location>
        <position position="67"/>
    </location>
    <ligand>
        <name>Mg(2+)</name>
        <dbReference type="ChEBI" id="CHEBI:18420"/>
        <label>2</label>
    </ligand>
</feature>
<feature type="binding site" evidence="1">
    <location>
        <position position="139"/>
    </location>
    <ligand>
        <name>Mg(2+)</name>
        <dbReference type="ChEBI" id="CHEBI:18420"/>
        <label>1</label>
    </ligand>
</feature>
<accession>Q7W4U0</accession>
<reference key="1">
    <citation type="journal article" date="2003" name="Nat. Genet.">
        <title>Comparative analysis of the genome sequences of Bordetella pertussis, Bordetella parapertussis and Bordetella bronchiseptica.</title>
        <authorList>
            <person name="Parkhill J."/>
            <person name="Sebaihia M."/>
            <person name="Preston A."/>
            <person name="Murphy L.D."/>
            <person name="Thomson N.R."/>
            <person name="Harris D.E."/>
            <person name="Holden M.T.G."/>
            <person name="Churcher C.M."/>
            <person name="Bentley S.D."/>
            <person name="Mungall K.L."/>
            <person name="Cerdeno-Tarraga A.-M."/>
            <person name="Temple L."/>
            <person name="James K.D."/>
            <person name="Harris B."/>
            <person name="Quail M.A."/>
            <person name="Achtman M."/>
            <person name="Atkin R."/>
            <person name="Baker S."/>
            <person name="Basham D."/>
            <person name="Bason N."/>
            <person name="Cherevach I."/>
            <person name="Chillingworth T."/>
            <person name="Collins M."/>
            <person name="Cronin A."/>
            <person name="Davis P."/>
            <person name="Doggett J."/>
            <person name="Feltwell T."/>
            <person name="Goble A."/>
            <person name="Hamlin N."/>
            <person name="Hauser H."/>
            <person name="Holroyd S."/>
            <person name="Jagels K."/>
            <person name="Leather S."/>
            <person name="Moule S."/>
            <person name="Norberczak H."/>
            <person name="O'Neil S."/>
            <person name="Ormond D."/>
            <person name="Price C."/>
            <person name="Rabbinowitsch E."/>
            <person name="Rutter S."/>
            <person name="Sanders M."/>
            <person name="Saunders D."/>
            <person name="Seeger K."/>
            <person name="Sharp S."/>
            <person name="Simmonds M."/>
            <person name="Skelton J."/>
            <person name="Squares R."/>
            <person name="Squares S."/>
            <person name="Stevens K."/>
            <person name="Unwin L."/>
            <person name="Whitehead S."/>
            <person name="Barrell B.G."/>
            <person name="Maskell D.J."/>
        </authorList>
    </citation>
    <scope>NUCLEOTIDE SEQUENCE [LARGE SCALE GENOMIC DNA]</scope>
    <source>
        <strain>12822 / ATCC BAA-587 / NCTC 13253</strain>
    </source>
</reference>
<organism>
    <name type="scientific">Bordetella parapertussis (strain 12822 / ATCC BAA-587 / NCTC 13253)</name>
    <dbReference type="NCBI Taxonomy" id="257311"/>
    <lineage>
        <taxon>Bacteria</taxon>
        <taxon>Pseudomonadati</taxon>
        <taxon>Pseudomonadota</taxon>
        <taxon>Betaproteobacteria</taxon>
        <taxon>Burkholderiales</taxon>
        <taxon>Alcaligenaceae</taxon>
        <taxon>Bordetella</taxon>
    </lineage>
</organism>